<name>TDX_CYNPY</name>
<organism>
    <name type="scientific">Cynops pyrrhogaster</name>
    <name type="common">Japanese fire-bellied newt</name>
    <name type="synonym">Molge pyrrhogaster</name>
    <dbReference type="NCBI Taxonomy" id="8330"/>
    <lineage>
        <taxon>Eukaryota</taxon>
        <taxon>Metazoa</taxon>
        <taxon>Chordata</taxon>
        <taxon>Craniata</taxon>
        <taxon>Vertebrata</taxon>
        <taxon>Euteleostomi</taxon>
        <taxon>Amphibia</taxon>
        <taxon>Batrachia</taxon>
        <taxon>Caudata</taxon>
        <taxon>Salamandroidea</taxon>
        <taxon>Salamandridae</taxon>
        <taxon>Pleurodelinae</taxon>
        <taxon>Cynops</taxon>
    </lineage>
</organism>
<feature type="chain" id="PRO_0000135086" description="Peroxiredoxin">
    <location>
        <begin position="1"/>
        <end position="200"/>
    </location>
</feature>
<feature type="domain" description="Thioredoxin" evidence="2">
    <location>
        <begin position="6"/>
        <end position="165"/>
    </location>
</feature>
<feature type="active site" description="Cysteine sulfenic acid (-SOH) intermediate" evidence="1">
    <location>
        <position position="52"/>
    </location>
</feature>
<feature type="disulfide bond" description="Interchain (with C-173); in linked form" evidence="1">
    <location>
        <position position="52"/>
    </location>
</feature>
<feature type="disulfide bond" description="Interchain (with C-52); in linked form" evidence="1">
    <location>
        <position position="173"/>
    </location>
</feature>
<sequence length="200" mass="22340">MSAGKAQIGKPAPEFQAKAVMPGGEFKDIKLADYRGKYVVFFFYPLDFTFVCPTEIIAFSDRAEEFRKINCELIAASVDSHFCHLAWTNTSRKEGGLGSMKIPLVADTKRTISQDYGVLKEDEGISFRGLFIIDDKGILRQITINDLPVGRSVDETLRLVQAFQHTDKFGEVCPAGWKPGSDTIKPDISKSKEYFSKQKA</sequence>
<dbReference type="EC" id="1.11.1.24" evidence="1"/>
<dbReference type="EMBL" id="D37808">
    <property type="protein sequence ID" value="BAA07054.1"/>
    <property type="molecule type" value="mRNA"/>
</dbReference>
<dbReference type="PIR" id="I51016">
    <property type="entry name" value="I51016"/>
</dbReference>
<dbReference type="SMR" id="Q90384"/>
<dbReference type="GO" id="GO:0005829">
    <property type="term" value="C:cytosol"/>
    <property type="evidence" value="ECO:0007669"/>
    <property type="project" value="TreeGrafter"/>
</dbReference>
<dbReference type="GO" id="GO:0008379">
    <property type="term" value="F:thioredoxin peroxidase activity"/>
    <property type="evidence" value="ECO:0007669"/>
    <property type="project" value="TreeGrafter"/>
</dbReference>
<dbReference type="GO" id="GO:0045454">
    <property type="term" value="P:cell redox homeostasis"/>
    <property type="evidence" value="ECO:0007669"/>
    <property type="project" value="TreeGrafter"/>
</dbReference>
<dbReference type="GO" id="GO:0042744">
    <property type="term" value="P:hydrogen peroxide catabolic process"/>
    <property type="evidence" value="ECO:0007669"/>
    <property type="project" value="TreeGrafter"/>
</dbReference>
<dbReference type="GO" id="GO:0045321">
    <property type="term" value="P:leukocyte activation"/>
    <property type="evidence" value="ECO:0007669"/>
    <property type="project" value="TreeGrafter"/>
</dbReference>
<dbReference type="GO" id="GO:0019430">
    <property type="term" value="P:removal of superoxide radicals"/>
    <property type="evidence" value="ECO:0007669"/>
    <property type="project" value="TreeGrafter"/>
</dbReference>
<dbReference type="CDD" id="cd03015">
    <property type="entry name" value="PRX_Typ2cys"/>
    <property type="match status" value="1"/>
</dbReference>
<dbReference type="FunFam" id="3.40.30.10:FF:000003">
    <property type="entry name" value="Peroxiredoxin 1"/>
    <property type="match status" value="1"/>
</dbReference>
<dbReference type="Gene3D" id="3.40.30.10">
    <property type="entry name" value="Glutaredoxin"/>
    <property type="match status" value="1"/>
</dbReference>
<dbReference type="InterPro" id="IPR000866">
    <property type="entry name" value="AhpC/TSA"/>
</dbReference>
<dbReference type="InterPro" id="IPR050217">
    <property type="entry name" value="Peroxiredoxin"/>
</dbReference>
<dbReference type="InterPro" id="IPR024706">
    <property type="entry name" value="Peroxiredoxin_AhpC-typ"/>
</dbReference>
<dbReference type="InterPro" id="IPR019479">
    <property type="entry name" value="Peroxiredoxin_C"/>
</dbReference>
<dbReference type="InterPro" id="IPR036249">
    <property type="entry name" value="Thioredoxin-like_sf"/>
</dbReference>
<dbReference type="InterPro" id="IPR013766">
    <property type="entry name" value="Thioredoxin_domain"/>
</dbReference>
<dbReference type="PANTHER" id="PTHR10681:SF111">
    <property type="entry name" value="PEROXIREDOXIN-1"/>
    <property type="match status" value="1"/>
</dbReference>
<dbReference type="PANTHER" id="PTHR10681">
    <property type="entry name" value="THIOREDOXIN PEROXIDASE"/>
    <property type="match status" value="1"/>
</dbReference>
<dbReference type="Pfam" id="PF10417">
    <property type="entry name" value="1-cysPrx_C"/>
    <property type="match status" value="1"/>
</dbReference>
<dbReference type="Pfam" id="PF00578">
    <property type="entry name" value="AhpC-TSA"/>
    <property type="match status" value="1"/>
</dbReference>
<dbReference type="PIRSF" id="PIRSF000239">
    <property type="entry name" value="AHPC"/>
    <property type="match status" value="1"/>
</dbReference>
<dbReference type="SUPFAM" id="SSF52833">
    <property type="entry name" value="Thioredoxin-like"/>
    <property type="match status" value="1"/>
</dbReference>
<dbReference type="PROSITE" id="PS51352">
    <property type="entry name" value="THIOREDOXIN_2"/>
    <property type="match status" value="1"/>
</dbReference>
<comment type="function">
    <text evidence="1">Thiol-specific peroxidase that catalyzes the reduction of hydrogen peroxide and organic hydroperoxides to water and alcohols, respectively. Plays a role in cell protection against oxidative stress by detoxifying peroxides and as sensor of hydrogen peroxide-mediated signaling events.</text>
</comment>
<comment type="catalytic activity">
    <reaction evidence="1">
        <text>a hydroperoxide + [thioredoxin]-dithiol = an alcohol + [thioredoxin]-disulfide + H2O</text>
        <dbReference type="Rhea" id="RHEA:62620"/>
        <dbReference type="Rhea" id="RHEA-COMP:10698"/>
        <dbReference type="Rhea" id="RHEA-COMP:10700"/>
        <dbReference type="ChEBI" id="CHEBI:15377"/>
        <dbReference type="ChEBI" id="CHEBI:29950"/>
        <dbReference type="ChEBI" id="CHEBI:30879"/>
        <dbReference type="ChEBI" id="CHEBI:35924"/>
        <dbReference type="ChEBI" id="CHEBI:50058"/>
        <dbReference type="EC" id="1.11.1.24"/>
    </reaction>
</comment>
<comment type="subunit">
    <text evidence="1">Homodimer; disulfide-linked, upon oxidation.</text>
</comment>
<comment type="miscellaneous">
    <text evidence="1">The active site is a conserved redox-active cysteine residue, the peroxidatic cysteine (C(P)), which makes the nucleophilic attack on the peroxide substrate. The peroxide oxidizes the C(P)-SH to cysteine sulfenic acid (C(P)-SOH), which then reacts with another cysteine residue, the resolving cysteine (C(R)), to form a disulfide bridge. The disulfide is subsequently reduced by an appropriate electron donor to complete the catalytic cycle. In this typical 2-Cys peroxiredoxin, C(R) is provided by the other dimeric subunit to form an intersubunit disulfide. The disulfide is subsequently reduced by thioredoxin.</text>
</comment>
<comment type="similarity">
    <text evidence="3">Belongs to the peroxiredoxin family. AhpC/Prx1 subfamily.</text>
</comment>
<protein>
    <recommendedName>
        <fullName>Peroxiredoxin</fullName>
        <ecNumber evidence="1">1.11.1.24</ecNumber>
    </recommendedName>
    <alternativeName>
        <fullName>Animal blastomere protein, 25 kDa</fullName>
        <shortName>ABP-25</shortName>
    </alternativeName>
    <alternativeName>
        <fullName>Thioredoxin peroxidase</fullName>
    </alternativeName>
    <alternativeName>
        <fullName>Thioredoxin-dependent peroxide reductase</fullName>
    </alternativeName>
    <alternativeName>
        <fullName evidence="3">Thioredoxin-dependent peroxiredoxin</fullName>
    </alternativeName>
</protein>
<proteinExistence type="evidence at transcript level"/>
<reference key="1">
    <citation type="journal article" date="1995" name="Roux's Arch. Dev. Biol.">
        <title>Pag gene-like protein (ABP-25) of Cynops embryo: regional distribution and gene expression during early embryogenesis.</title>
        <authorList>
            <person name="Tabata T."/>
            <person name="Kamio K."/>
            <person name="Tajima T."/>
            <person name="Kaneda T."/>
            <person name="Suzuki A."/>
        </authorList>
    </citation>
    <scope>NUCLEOTIDE SEQUENCE [MRNA]</scope>
    <source>
        <tissue>Embryo</tissue>
    </source>
</reference>
<evidence type="ECO:0000250" key="1">
    <source>
        <dbReference type="UniProtKB" id="Q06830"/>
    </source>
</evidence>
<evidence type="ECO:0000255" key="2">
    <source>
        <dbReference type="PROSITE-ProRule" id="PRU00691"/>
    </source>
</evidence>
<evidence type="ECO:0000305" key="3"/>
<accession>Q90384</accession>
<keyword id="KW-0049">Antioxidant</keyword>
<keyword id="KW-1015">Disulfide bond</keyword>
<keyword id="KW-0560">Oxidoreductase</keyword>
<keyword id="KW-0575">Peroxidase</keyword>
<keyword id="KW-0676">Redox-active center</keyword>